<dbReference type="EC" id="2.3.1.86" evidence="1"/>
<dbReference type="EC" id="1.1.1.100" evidence="1"/>
<dbReference type="EC" id="2.3.1.41" evidence="1"/>
<dbReference type="EMBL" id="EF177826">
    <property type="protein sequence ID" value="ABU23831.1"/>
    <property type="molecule type" value="Genomic_DNA"/>
</dbReference>
<dbReference type="SMR" id="A7TUG9"/>
<dbReference type="GO" id="GO:0004316">
    <property type="term" value="F:3-oxoacyl-[acyl-carrier-protein] reductase (NADPH) activity"/>
    <property type="evidence" value="ECO:0007669"/>
    <property type="project" value="UniProtKB-EC"/>
</dbReference>
<dbReference type="GO" id="GO:0004315">
    <property type="term" value="F:3-oxoacyl-[acyl-carrier-protein] synthase activity"/>
    <property type="evidence" value="ECO:0007669"/>
    <property type="project" value="UniProtKB-EC"/>
</dbReference>
<dbReference type="GO" id="GO:0004321">
    <property type="term" value="F:fatty-acyl-CoA synthase activity"/>
    <property type="evidence" value="ECO:0007669"/>
    <property type="project" value="UniProtKB-EC"/>
</dbReference>
<dbReference type="GO" id="GO:0008897">
    <property type="term" value="F:holo-[acyl-carrier-protein] synthase activity"/>
    <property type="evidence" value="ECO:0007669"/>
    <property type="project" value="InterPro"/>
</dbReference>
<dbReference type="GO" id="GO:0000287">
    <property type="term" value="F:magnesium ion binding"/>
    <property type="evidence" value="ECO:0007669"/>
    <property type="project" value="InterPro"/>
</dbReference>
<dbReference type="GO" id="GO:0006633">
    <property type="term" value="P:fatty acid biosynthetic process"/>
    <property type="evidence" value="ECO:0007669"/>
    <property type="project" value="UniProtKB-KW"/>
</dbReference>
<dbReference type="Gene3D" id="3.40.47.10">
    <property type="match status" value="1"/>
</dbReference>
<dbReference type="Gene3D" id="3.90.470.20">
    <property type="entry name" value="4'-phosphopantetheinyl transferase domain"/>
    <property type="match status" value="1"/>
</dbReference>
<dbReference type="InterPro" id="IPR008278">
    <property type="entry name" value="4-PPantetheinyl_Trfase_dom"/>
</dbReference>
<dbReference type="InterPro" id="IPR037143">
    <property type="entry name" value="4-PPantetheinyl_Trfase_dom_sf"/>
</dbReference>
<dbReference type="InterPro" id="IPR004568">
    <property type="entry name" value="Ppantetheine-prot_Trfase_dom"/>
</dbReference>
<dbReference type="InterPro" id="IPR016039">
    <property type="entry name" value="Thiolase-like"/>
</dbReference>
<dbReference type="NCBIfam" id="TIGR00556">
    <property type="entry name" value="pantethn_trn"/>
    <property type="match status" value="1"/>
</dbReference>
<dbReference type="Pfam" id="PF01648">
    <property type="entry name" value="ACPS"/>
    <property type="match status" value="1"/>
</dbReference>
<dbReference type="SUPFAM" id="SSF56214">
    <property type="entry name" value="4'-phosphopantetheinyl transferase"/>
    <property type="match status" value="1"/>
</dbReference>
<dbReference type="SUPFAM" id="SSF53901">
    <property type="entry name" value="Thiolase-like"/>
    <property type="match status" value="1"/>
</dbReference>
<name>HEXA_DOTSE</name>
<sequence>AAAWMLNGCLQVMDSRTIPANRNADNVDPALQTATHLCFPTRPVRVQDVRAFILTSFGFGQKGGQVVGVAPKYFFATLDEEVYKDYSVRVTKRSKTADRAYAKALMSNAIVKVQDHSPYEQEDQSRIFMDPLSRITEDAETGSYHFDTKDIRNVADVKARLTRLVRGERLNARPDAASGLAQAARSAQAWIEKQTGGRSSVDTSTVGIDLVDLSAFSAHENETFIERNFTEQEKAFAKQSLDQKMAFASRWAAKEAVFKCLHTQTKGAGAAMKDIEIVKSDNAPQGQAGRKAGLEDIQLSISHGEDCLIAVAIGIAGNGPAKYTL</sequence>
<comment type="function">
    <text evidence="2 5 6 10 12 13 14">Fatty acid synthase alpha subunit; part of the fragmented gene cluster that mediates the biosynthesis of dothistromin (DOTH), a polyketide toxin very similar in structure to the aflatoxin precursor, versicolorin B (PubMed:12039746, PubMed:17683963, PubMed:22069571, PubMed:23207690, PubMed:23448391). The first step of the pathway is the conversion of acetate to norsolorinic acid (NOR) and requires the fatty acid synthase subunits hexA and hexB, as well as the polyketide synthase pksA (PubMed:16649078, PubMed:23207690). PksA combines a hexanoyl starter unit and 7 malonyl-CoA extender units to synthesize the precursor NOR (By similarity). The hexanoyl starter unit is provided to the acyl-carrier protein (ACP) domain by the fungal fatty acid synthase hexA/hexB (By similarity). The second step is the conversion of NOR to averantin (AVN) and requires the norsolorinic acid ketoreductase nor1, which catalyzes the dehydration of norsolorinic acid to form (1'S)-averantin (PubMed:23207690). The cytochrome P450 monooxygenase avnA then catalyzes the hydroxylation of AVN to 5'hydroxyaverantin (HAVN) (PubMed:23207690). The next step is performed by adhA that transforms HAVN to averufin (AVF) (PubMed:23207690). Averufin might then be converted to hydroxyversicolorone by cypX and avfA (PubMed:23207690). Hydroxyversicolorone is further converted versiconal hemiacetal acetate (VHA) by moxY (PubMed:23207690). VHA is then the substrate for the versiconal hemiacetal acetate esterase est1 to yield versiconal (VAL) (PubMed:23207690). Versicolorin B synthase vbsA then converts VAL to versicolorin B (VERB) by closing the bisfuran ring (PubMed:16649078, PubMed:23207690). Then, the activity of the versicolorin B desaturase verB leads to versicolorin A (VERA) (PubMed:23207690). DotB, a predicted chloroperoxidase, may perform epoxidation of the A-ring of VERA (PubMed:23207690). Alternatively, a cytochrome P450, such as cypX or avnA could catalyze this step (PubMed:23207690). It is also possible that another, uncharacterized, cytochrome P450 enzyme is responsible for this step (PubMed:23207690). Opening of the epoxide could potentially be achieved by the epoxide hydrolase epoA (PubMed:23207690). However, epoA seems not to be required for DOTH biosynthesis, but other epoxide hydrolases may have the ability to complement this hydrolysis (PubMed:23207690). Alternatively, opening of the epoxide ring could be achieved non-enzymatically (PubMed:23207690). The next step is the deoxygenation of ring A to yield the 5,8-dihydroxyanthraquinone which is most likely catalyzed by the NADPH dehydrogenase encoded by ver1 (PubMed:23207690). The last stages of DOTH biosynthesis are proposed to involve hydroxylation of the bisfuran (PubMed:23207690). OrdB and norB might have oxidative roles here (PubMed:23207690). An alternative possibility is that cytochrome P450 monoogenases such as avnA and cypX might perform these steps in addition to previously proposed steps (PubMed:23207690).</text>
</comment>
<comment type="catalytic activity">
    <reaction evidence="1">
        <text>acetyl-CoA + n malonyl-CoA + 2n NADPH + 4n H(+) = a long-chain-acyl-CoA + n CoA + n CO2 + 2n NADP(+).</text>
        <dbReference type="EC" id="2.3.1.86"/>
    </reaction>
</comment>
<comment type="catalytic activity">
    <reaction evidence="4">
        <text>a fatty acyl-[ACP] + malonyl-[ACP] + H(+) = a 3-oxoacyl-[ACP] + holo-[ACP] + CO2</text>
        <dbReference type="Rhea" id="RHEA:22836"/>
        <dbReference type="Rhea" id="RHEA-COMP:9623"/>
        <dbReference type="Rhea" id="RHEA-COMP:9685"/>
        <dbReference type="Rhea" id="RHEA-COMP:9916"/>
        <dbReference type="Rhea" id="RHEA-COMP:14125"/>
        <dbReference type="ChEBI" id="CHEBI:15378"/>
        <dbReference type="ChEBI" id="CHEBI:16526"/>
        <dbReference type="ChEBI" id="CHEBI:64479"/>
        <dbReference type="ChEBI" id="CHEBI:78449"/>
        <dbReference type="ChEBI" id="CHEBI:78776"/>
        <dbReference type="ChEBI" id="CHEBI:138651"/>
        <dbReference type="EC" id="2.3.1.41"/>
    </reaction>
</comment>
<comment type="catalytic activity">
    <reaction evidence="1">
        <text>a (3R)-hydroxyacyl-[ACP] + NADP(+) = a 3-oxoacyl-[ACP] + NADPH + H(+)</text>
        <dbReference type="Rhea" id="RHEA:17397"/>
        <dbReference type="Rhea" id="RHEA-COMP:9916"/>
        <dbReference type="Rhea" id="RHEA-COMP:9945"/>
        <dbReference type="ChEBI" id="CHEBI:15378"/>
        <dbReference type="ChEBI" id="CHEBI:57783"/>
        <dbReference type="ChEBI" id="CHEBI:58349"/>
        <dbReference type="ChEBI" id="CHEBI:78776"/>
        <dbReference type="ChEBI" id="CHEBI:78827"/>
        <dbReference type="EC" id="1.1.1.100"/>
    </reaction>
</comment>
<comment type="pathway">
    <text evidence="10 13">Mycotoxin biosynthesis.</text>
</comment>
<comment type="subunit">
    <text evidence="1">[Alpha(6)beta(6)] hexamers of two multifunctional subunits (alpha and beta).</text>
</comment>
<comment type="induction">
    <text evidence="7 8">Expression is positively regulated by the dothistromin-specific transcription factors aflR and aflJ (PubMed:23207690, PubMed:25986547).</text>
</comment>
<comment type="PTM">
    <text evidence="11">4'-phosphopantetheine is transferred from CoA to a specific serine of the acyl carrier domain by the C-terminal PPT domain. This modification is essential for activity because fatty acids are bound in thioester linkage to the sulfhydryl of the prosthetic group.</text>
</comment>
<comment type="similarity">
    <text evidence="11">Belongs to the thiolase-like superfamily. Fungal fatty acid synthetase subunit alpha family.</text>
</comment>
<accession>A7TUG9</accession>
<proteinExistence type="evidence at transcript level"/>
<organism>
    <name type="scientific">Dothistroma septosporum</name>
    <name type="common">Red band needle blight fungus</name>
    <name type="synonym">Mycosphaerella pini</name>
    <dbReference type="NCBI Taxonomy" id="64363"/>
    <lineage>
        <taxon>Eukaryota</taxon>
        <taxon>Fungi</taxon>
        <taxon>Dikarya</taxon>
        <taxon>Ascomycota</taxon>
        <taxon>Pezizomycotina</taxon>
        <taxon>Dothideomycetes</taxon>
        <taxon>Dothideomycetidae</taxon>
        <taxon>Mycosphaerellales</taxon>
        <taxon>Mycosphaerellaceae</taxon>
        <taxon>Dothistroma</taxon>
    </lineage>
</organism>
<protein>
    <recommendedName>
        <fullName evidence="1">Fatty acid synthase alpha subunit hexA</fullName>
        <ecNumber evidence="1">2.3.1.86</ecNumber>
    </recommendedName>
    <domain>
        <recommendedName>
            <fullName evidence="1">3-oxoacyl-[acyl-carrier-protein] reductase</fullName>
            <ecNumber evidence="1">1.1.1.100</ecNumber>
        </recommendedName>
        <alternativeName>
            <fullName evidence="3">Beta-ketoacyl reductase</fullName>
        </alternativeName>
    </domain>
    <domain>
        <recommendedName>
            <fullName evidence="1">3-oxoacyl-[acyl-carrier-protein] synthase</fullName>
            <ecNumber evidence="1">2.3.1.41</ecNumber>
        </recommendedName>
        <alternativeName>
            <fullName evidence="9">Dothistromin biosynthesis protein hexA</fullName>
        </alternativeName>
    </domain>
</protein>
<keyword id="KW-0275">Fatty acid biosynthesis</keyword>
<keyword id="KW-0276">Fatty acid metabolism</keyword>
<keyword id="KW-0444">Lipid biosynthesis</keyword>
<keyword id="KW-0443">Lipid metabolism</keyword>
<keyword id="KW-0460">Magnesium</keyword>
<keyword id="KW-0479">Metal-binding</keyword>
<keyword id="KW-0511">Multifunctional enzyme</keyword>
<keyword id="KW-0521">NADP</keyword>
<keyword id="KW-0560">Oxidoreductase</keyword>
<keyword id="KW-0596">Phosphopantetheine</keyword>
<keyword id="KW-0597">Phosphoprotein</keyword>
<keyword id="KW-0808">Transferase</keyword>
<gene>
    <name evidence="9" type="primary">hexA</name>
</gene>
<reference key="1">
    <citation type="journal article" date="2007" name="Fungal Genet. Biol.">
        <title>A fragmented aflatoxin-like gene cluster in the forest pathogen Dothistroma septosporum.</title>
        <authorList>
            <person name="Zhang S."/>
            <person name="Schwelm A."/>
            <person name="Jin H."/>
            <person name="Collins L.J."/>
            <person name="Bradshaw R.E."/>
        </authorList>
    </citation>
    <scope>NUCLEOTIDE SEQUENCE [GENOMIC DNA]</scope>
    <scope>FUNCTION</scope>
    <source>
        <strain>NZE7</strain>
    </source>
</reference>
<reference key="2">
    <citation type="journal article" date="2002" name="Appl. Environ. Microbiol.">
        <title>Dothistroma pini, a forest pathogen, contains homologs of aflatoxin biosynthetic pathway genes.</title>
        <authorList>
            <person name="Bradshaw R.E."/>
            <person name="Bhatnagar D."/>
            <person name="Ganley R.J."/>
            <person name="Gillman C.J."/>
            <person name="Monahan B.J."/>
            <person name="Seconi J.M."/>
        </authorList>
    </citation>
    <scope>FUNCTION</scope>
</reference>
<reference key="3">
    <citation type="journal article" date="2006" name="Mycopathologia">
        <title>A polyketide synthase gene required for biosynthesis of the aflatoxin-like toxin, dothistromin.</title>
        <authorList>
            <person name="Bradshaw R.E."/>
            <person name="Jin H."/>
            <person name="Morgan B.S."/>
            <person name="Schwelm A."/>
            <person name="Teddy O.R."/>
            <person name="Young C.A."/>
            <person name="Zhang S."/>
        </authorList>
    </citation>
    <scope>FUNCTION</scope>
</reference>
<reference key="4">
    <citation type="journal article" date="2010" name="Toxins">
        <title>Genetics of dothistromin biosynthesis of Dothistroma septosporum: an update.</title>
        <authorList>
            <person name="Schwelm A."/>
            <person name="Bradshaw R.E."/>
        </authorList>
    </citation>
    <scope>REVIEW ON FUNCTION</scope>
    <scope>PATHWAY</scope>
</reference>
<reference key="5">
    <citation type="journal article" date="2013" name="Fungal Genet. Biol.">
        <title>Dothistromin genes at multiple separate loci are regulated by AflR.</title>
        <authorList>
            <person name="Chettri P."/>
            <person name="Ehrlich K.C."/>
            <person name="Cary J.W."/>
            <person name="Collemare J."/>
            <person name="Cox M.P."/>
            <person name="Griffiths S.A."/>
            <person name="Olson M.A."/>
            <person name="de Wit P.J."/>
            <person name="Bradshaw R.E."/>
        </authorList>
    </citation>
    <scope>FUNCTION</scope>
    <scope>INDUCTION</scope>
    <scope>PATHWAY</scope>
</reference>
<reference key="6">
    <citation type="journal article" date="2013" name="New Phytol.">
        <title>Fragmentation of an aflatoxin-like gene cluster in a forest pathogen.</title>
        <authorList>
            <person name="Bradshaw R.E."/>
            <person name="Slot J.C."/>
            <person name="Moore G.G."/>
            <person name="Chettri P."/>
            <person name="de Wit P.J."/>
            <person name="Ehrlich K.C."/>
            <person name="Ganley A.R."/>
            <person name="Olson M.A."/>
            <person name="Rokas A."/>
            <person name="Carbone I."/>
            <person name="Cox M.P."/>
        </authorList>
    </citation>
    <scope>FUNCTION</scope>
</reference>
<reference key="7">
    <citation type="journal article" date="2015" name="Fungal Biol.">
        <title>Regulation of the aflatoxin-like toxin dothistromin by AflJ.</title>
        <authorList>
            <person name="Chettri P."/>
            <person name="Ehrlich K.C."/>
            <person name="Bradshaw R.E."/>
        </authorList>
    </citation>
    <scope>INDUCTION</scope>
</reference>
<evidence type="ECO:0000250" key="1">
    <source>
        <dbReference type="UniProtKB" id="P19097"/>
    </source>
</evidence>
<evidence type="ECO:0000250" key="2">
    <source>
        <dbReference type="UniProtKB" id="Q12437"/>
    </source>
</evidence>
<evidence type="ECO:0000250" key="3">
    <source>
        <dbReference type="UniProtKB" id="Q8TGA2"/>
    </source>
</evidence>
<evidence type="ECO:0000255" key="4">
    <source>
        <dbReference type="PROSITE-ProRule" id="PRU10022"/>
    </source>
</evidence>
<evidence type="ECO:0000269" key="5">
    <source>
    </source>
</evidence>
<evidence type="ECO:0000269" key="6">
    <source>
    </source>
</evidence>
<evidence type="ECO:0000269" key="7">
    <source>
    </source>
</evidence>
<evidence type="ECO:0000269" key="8">
    <source>
    </source>
</evidence>
<evidence type="ECO:0000303" key="9">
    <source>
    </source>
</evidence>
<evidence type="ECO:0000303" key="10">
    <source>
    </source>
</evidence>
<evidence type="ECO:0000305" key="11"/>
<evidence type="ECO:0000305" key="12">
    <source>
    </source>
</evidence>
<evidence type="ECO:0000305" key="13">
    <source>
    </source>
</evidence>
<evidence type="ECO:0000305" key="14">
    <source>
    </source>
</evidence>
<feature type="chain" id="PRO_0000443459" description="Fatty acid synthase alpha subunit hexA">
    <location>
        <begin position="1" status="less than"/>
        <end position="325"/>
    </location>
</feature>
<feature type="binding site" evidence="1">
    <location>
        <begin position="209"/>
        <end position="211"/>
    </location>
    <ligand>
        <name>acetyl-CoA</name>
        <dbReference type="ChEBI" id="CHEBI:57288"/>
    </ligand>
</feature>
<feature type="binding site" evidence="1">
    <location>
        <position position="209"/>
    </location>
    <ligand>
        <name>Mg(2+)</name>
        <dbReference type="ChEBI" id="CHEBI:18420"/>
    </ligand>
</feature>
<feature type="binding site" evidence="1">
    <location>
        <begin position="255"/>
        <end position="265"/>
    </location>
    <ligand>
        <name>acetyl-CoA</name>
        <dbReference type="ChEBI" id="CHEBI:57288"/>
    </ligand>
</feature>
<feature type="binding site" evidence="1">
    <location>
        <begin position="279"/>
        <end position="282"/>
    </location>
    <ligand>
        <name>acetyl-CoA</name>
        <dbReference type="ChEBI" id="CHEBI:57288"/>
    </ligand>
</feature>
<feature type="binding site" evidence="1">
    <location>
        <begin position="301"/>
        <end position="303"/>
    </location>
    <ligand>
        <name>acetyl-CoA</name>
        <dbReference type="ChEBI" id="CHEBI:57288"/>
    </ligand>
</feature>
<feature type="binding site" evidence="1">
    <location>
        <position position="302"/>
    </location>
    <ligand>
        <name>Mg(2+)</name>
        <dbReference type="ChEBI" id="CHEBI:18420"/>
    </ligand>
</feature>
<feature type="non-terminal residue" evidence="11">
    <location>
        <position position="1"/>
    </location>
</feature>